<evidence type="ECO:0000255" key="1">
    <source>
        <dbReference type="HAMAP-Rule" id="MF_00160"/>
    </source>
</evidence>
<name>SERC_SHEPW</name>
<comment type="function">
    <text evidence="1">Catalyzes the reversible conversion of 3-phosphohydroxypyruvate to phosphoserine and of 3-hydroxy-2-oxo-4-phosphonooxybutanoate to phosphohydroxythreonine.</text>
</comment>
<comment type="catalytic activity">
    <reaction evidence="1">
        <text>O-phospho-L-serine + 2-oxoglutarate = 3-phosphooxypyruvate + L-glutamate</text>
        <dbReference type="Rhea" id="RHEA:14329"/>
        <dbReference type="ChEBI" id="CHEBI:16810"/>
        <dbReference type="ChEBI" id="CHEBI:18110"/>
        <dbReference type="ChEBI" id="CHEBI:29985"/>
        <dbReference type="ChEBI" id="CHEBI:57524"/>
        <dbReference type="EC" id="2.6.1.52"/>
    </reaction>
</comment>
<comment type="catalytic activity">
    <reaction evidence="1">
        <text>4-(phosphooxy)-L-threonine + 2-oxoglutarate = (R)-3-hydroxy-2-oxo-4-phosphooxybutanoate + L-glutamate</text>
        <dbReference type="Rhea" id="RHEA:16573"/>
        <dbReference type="ChEBI" id="CHEBI:16810"/>
        <dbReference type="ChEBI" id="CHEBI:29985"/>
        <dbReference type="ChEBI" id="CHEBI:58452"/>
        <dbReference type="ChEBI" id="CHEBI:58538"/>
        <dbReference type="EC" id="2.6.1.52"/>
    </reaction>
</comment>
<comment type="cofactor">
    <cofactor evidence="1">
        <name>pyridoxal 5'-phosphate</name>
        <dbReference type="ChEBI" id="CHEBI:597326"/>
    </cofactor>
    <text evidence="1">Binds 1 pyridoxal phosphate per subunit.</text>
</comment>
<comment type="pathway">
    <text evidence="1">Amino-acid biosynthesis; L-serine biosynthesis; L-serine from 3-phospho-D-glycerate: step 2/3.</text>
</comment>
<comment type="pathway">
    <text evidence="1">Cofactor biosynthesis; pyridoxine 5'-phosphate biosynthesis; pyridoxine 5'-phosphate from D-erythrose 4-phosphate: step 3/5.</text>
</comment>
<comment type="subunit">
    <text evidence="1">Homodimer.</text>
</comment>
<comment type="subcellular location">
    <subcellularLocation>
        <location evidence="1">Cytoplasm</location>
    </subcellularLocation>
</comment>
<comment type="similarity">
    <text evidence="1">Belongs to the class-V pyridoxal-phosphate-dependent aminotransferase family. SerC subfamily.</text>
</comment>
<gene>
    <name evidence="1" type="primary">serC</name>
    <name type="ordered locus">swp_2485</name>
</gene>
<proteinExistence type="inferred from homology"/>
<protein>
    <recommendedName>
        <fullName evidence="1">Phosphoserine aminotransferase</fullName>
        <ecNumber evidence="1">2.6.1.52</ecNumber>
    </recommendedName>
    <alternativeName>
        <fullName evidence="1">Phosphohydroxythreonine aminotransferase</fullName>
        <shortName evidence="1">PSAT</shortName>
    </alternativeName>
</protein>
<keyword id="KW-0028">Amino-acid biosynthesis</keyword>
<keyword id="KW-0032">Aminotransferase</keyword>
<keyword id="KW-0963">Cytoplasm</keyword>
<keyword id="KW-0663">Pyridoxal phosphate</keyword>
<keyword id="KW-0664">Pyridoxine biosynthesis</keyword>
<keyword id="KW-0718">Serine biosynthesis</keyword>
<keyword id="KW-0808">Transferase</keyword>
<reference key="1">
    <citation type="journal article" date="2008" name="PLoS ONE">
        <title>Environmental adaptation: genomic analysis of the piezotolerant and psychrotolerant deep-sea iron reducing bacterium Shewanella piezotolerans WP3.</title>
        <authorList>
            <person name="Wang F."/>
            <person name="Wang J."/>
            <person name="Jian H."/>
            <person name="Zhang B."/>
            <person name="Li S."/>
            <person name="Wang F."/>
            <person name="Zeng X."/>
            <person name="Gao L."/>
            <person name="Bartlett D.H."/>
            <person name="Yu J."/>
            <person name="Hu S."/>
            <person name="Xiao X."/>
        </authorList>
    </citation>
    <scope>NUCLEOTIDE SEQUENCE [LARGE SCALE GENOMIC DNA]</scope>
    <source>
        <strain>WP3 / JCM 13877</strain>
    </source>
</reference>
<feature type="chain" id="PRO_1000203571" description="Phosphoserine aminotransferase">
    <location>
        <begin position="1"/>
        <end position="363"/>
    </location>
</feature>
<feature type="binding site" evidence="1">
    <location>
        <position position="42"/>
    </location>
    <ligand>
        <name>L-glutamate</name>
        <dbReference type="ChEBI" id="CHEBI:29985"/>
    </ligand>
</feature>
<feature type="binding site" evidence="1">
    <location>
        <begin position="76"/>
        <end position="77"/>
    </location>
    <ligand>
        <name>pyridoxal 5'-phosphate</name>
        <dbReference type="ChEBI" id="CHEBI:597326"/>
    </ligand>
</feature>
<feature type="binding site" evidence="1">
    <location>
        <position position="102"/>
    </location>
    <ligand>
        <name>pyridoxal 5'-phosphate</name>
        <dbReference type="ChEBI" id="CHEBI:597326"/>
    </ligand>
</feature>
<feature type="binding site" evidence="1">
    <location>
        <position position="156"/>
    </location>
    <ligand>
        <name>pyridoxal 5'-phosphate</name>
        <dbReference type="ChEBI" id="CHEBI:597326"/>
    </ligand>
</feature>
<feature type="binding site" evidence="1">
    <location>
        <position position="175"/>
    </location>
    <ligand>
        <name>pyridoxal 5'-phosphate</name>
        <dbReference type="ChEBI" id="CHEBI:597326"/>
    </ligand>
</feature>
<feature type="binding site" evidence="1">
    <location>
        <position position="198"/>
    </location>
    <ligand>
        <name>pyridoxal 5'-phosphate</name>
        <dbReference type="ChEBI" id="CHEBI:597326"/>
    </ligand>
</feature>
<feature type="binding site" evidence="1">
    <location>
        <begin position="240"/>
        <end position="241"/>
    </location>
    <ligand>
        <name>pyridoxal 5'-phosphate</name>
        <dbReference type="ChEBI" id="CHEBI:597326"/>
    </ligand>
</feature>
<feature type="modified residue" description="N6-(pyridoxal phosphate)lysine" evidence="1">
    <location>
        <position position="199"/>
    </location>
</feature>
<dbReference type="EC" id="2.6.1.52" evidence="1"/>
<dbReference type="EMBL" id="CP000472">
    <property type="protein sequence ID" value="ACJ29226.1"/>
    <property type="molecule type" value="Genomic_DNA"/>
</dbReference>
<dbReference type="RefSeq" id="WP_020912584.1">
    <property type="nucleotide sequence ID" value="NC_011566.1"/>
</dbReference>
<dbReference type="SMR" id="B8CMG9"/>
<dbReference type="STRING" id="225849.swp_2485"/>
<dbReference type="KEGG" id="swp:swp_2485"/>
<dbReference type="eggNOG" id="COG1932">
    <property type="taxonomic scope" value="Bacteria"/>
</dbReference>
<dbReference type="HOGENOM" id="CLU_034866_0_2_6"/>
<dbReference type="OrthoDB" id="9809412at2"/>
<dbReference type="UniPathway" id="UPA00135">
    <property type="reaction ID" value="UER00197"/>
</dbReference>
<dbReference type="UniPathway" id="UPA00244">
    <property type="reaction ID" value="UER00311"/>
</dbReference>
<dbReference type="Proteomes" id="UP000000753">
    <property type="component" value="Chromosome"/>
</dbReference>
<dbReference type="GO" id="GO:0005737">
    <property type="term" value="C:cytoplasm"/>
    <property type="evidence" value="ECO:0007669"/>
    <property type="project" value="UniProtKB-SubCell"/>
</dbReference>
<dbReference type="GO" id="GO:0004648">
    <property type="term" value="F:O-phospho-L-serine:2-oxoglutarate aminotransferase activity"/>
    <property type="evidence" value="ECO:0007669"/>
    <property type="project" value="UniProtKB-UniRule"/>
</dbReference>
<dbReference type="GO" id="GO:0030170">
    <property type="term" value="F:pyridoxal phosphate binding"/>
    <property type="evidence" value="ECO:0007669"/>
    <property type="project" value="UniProtKB-UniRule"/>
</dbReference>
<dbReference type="GO" id="GO:0006564">
    <property type="term" value="P:L-serine biosynthetic process"/>
    <property type="evidence" value="ECO:0007669"/>
    <property type="project" value="UniProtKB-UniRule"/>
</dbReference>
<dbReference type="GO" id="GO:0008615">
    <property type="term" value="P:pyridoxine biosynthetic process"/>
    <property type="evidence" value="ECO:0007669"/>
    <property type="project" value="UniProtKB-UniRule"/>
</dbReference>
<dbReference type="FunFam" id="3.40.640.10:FF:000010">
    <property type="entry name" value="Phosphoserine aminotransferase"/>
    <property type="match status" value="1"/>
</dbReference>
<dbReference type="FunFam" id="3.90.1150.10:FF:000006">
    <property type="entry name" value="Phosphoserine aminotransferase"/>
    <property type="match status" value="1"/>
</dbReference>
<dbReference type="Gene3D" id="3.90.1150.10">
    <property type="entry name" value="Aspartate Aminotransferase, domain 1"/>
    <property type="match status" value="1"/>
</dbReference>
<dbReference type="Gene3D" id="3.40.640.10">
    <property type="entry name" value="Type I PLP-dependent aspartate aminotransferase-like (Major domain)"/>
    <property type="match status" value="1"/>
</dbReference>
<dbReference type="HAMAP" id="MF_00160">
    <property type="entry name" value="SerC_aminotrans_5"/>
    <property type="match status" value="1"/>
</dbReference>
<dbReference type="InterPro" id="IPR000192">
    <property type="entry name" value="Aminotrans_V_dom"/>
</dbReference>
<dbReference type="InterPro" id="IPR022278">
    <property type="entry name" value="Pser_aminoTfrase"/>
</dbReference>
<dbReference type="InterPro" id="IPR015424">
    <property type="entry name" value="PyrdxlP-dep_Trfase"/>
</dbReference>
<dbReference type="InterPro" id="IPR015421">
    <property type="entry name" value="PyrdxlP-dep_Trfase_major"/>
</dbReference>
<dbReference type="InterPro" id="IPR015422">
    <property type="entry name" value="PyrdxlP-dep_Trfase_small"/>
</dbReference>
<dbReference type="NCBIfam" id="NF003764">
    <property type="entry name" value="PRK05355.1"/>
    <property type="match status" value="1"/>
</dbReference>
<dbReference type="NCBIfam" id="TIGR01364">
    <property type="entry name" value="serC_1"/>
    <property type="match status" value="1"/>
</dbReference>
<dbReference type="PANTHER" id="PTHR43247">
    <property type="entry name" value="PHOSPHOSERINE AMINOTRANSFERASE"/>
    <property type="match status" value="1"/>
</dbReference>
<dbReference type="PANTHER" id="PTHR43247:SF1">
    <property type="entry name" value="PHOSPHOSERINE AMINOTRANSFERASE"/>
    <property type="match status" value="1"/>
</dbReference>
<dbReference type="Pfam" id="PF00266">
    <property type="entry name" value="Aminotran_5"/>
    <property type="match status" value="1"/>
</dbReference>
<dbReference type="PIRSF" id="PIRSF000525">
    <property type="entry name" value="SerC"/>
    <property type="match status" value="1"/>
</dbReference>
<dbReference type="SUPFAM" id="SSF53383">
    <property type="entry name" value="PLP-dependent transferases"/>
    <property type="match status" value="1"/>
</dbReference>
<accession>B8CMG9</accession>
<sequence>MSATFNFCAGPAMLPKPVMDKAQSELLDWNSMGTSVMEISHRSKEFIALTNQAEADLRQLMDIPANYHVLFMHGGGRGQFSAIANNFLGDKGRALYLVDGSWSSAAVEEAKKLVGEENIDTINIVENNNGINSVVLPSLSNIDKDYRYLHYCPNETVDGIEIFDTINSPWPVIADMSSNILSRKIDVNQFALIYAGAQKNIGPSGLSIVIVRNDMLSLPSLPQSSIMDYKLAVKHGSMYNTPPTFAWYLAAEVFAWLKVSGGVDSVELINIEKAMRLYQCIDELDFYKSGVAVENRSRMNVTFQLVNAELDNQFLEEAKQAGLVALKGHRSVGGMRASIYNAMPIEGVIELVKFMQTFAKKHS</sequence>
<organism>
    <name type="scientific">Shewanella piezotolerans (strain WP3 / JCM 13877)</name>
    <dbReference type="NCBI Taxonomy" id="225849"/>
    <lineage>
        <taxon>Bacteria</taxon>
        <taxon>Pseudomonadati</taxon>
        <taxon>Pseudomonadota</taxon>
        <taxon>Gammaproteobacteria</taxon>
        <taxon>Alteromonadales</taxon>
        <taxon>Shewanellaceae</taxon>
        <taxon>Shewanella</taxon>
    </lineage>
</organism>